<proteinExistence type="inferred from homology"/>
<dbReference type="EC" id="6.1.1.16" evidence="1"/>
<dbReference type="EMBL" id="AE014074">
    <property type="protein sequence ID" value="AAM80279.1"/>
    <property type="molecule type" value="Genomic_DNA"/>
</dbReference>
<dbReference type="RefSeq" id="WP_011055013.1">
    <property type="nucleotide sequence ID" value="NC_004070.1"/>
</dbReference>
<dbReference type="SMR" id="P0DG32"/>
<dbReference type="KEGG" id="spg:SpyM3_1672"/>
<dbReference type="HOGENOM" id="CLU_013528_0_1_9"/>
<dbReference type="Proteomes" id="UP000000564">
    <property type="component" value="Chromosome"/>
</dbReference>
<dbReference type="GO" id="GO:0005829">
    <property type="term" value="C:cytosol"/>
    <property type="evidence" value="ECO:0007669"/>
    <property type="project" value="TreeGrafter"/>
</dbReference>
<dbReference type="GO" id="GO:0005524">
    <property type="term" value="F:ATP binding"/>
    <property type="evidence" value="ECO:0007669"/>
    <property type="project" value="UniProtKB-UniRule"/>
</dbReference>
<dbReference type="GO" id="GO:0004817">
    <property type="term" value="F:cysteine-tRNA ligase activity"/>
    <property type="evidence" value="ECO:0007669"/>
    <property type="project" value="UniProtKB-UniRule"/>
</dbReference>
<dbReference type="GO" id="GO:0008270">
    <property type="term" value="F:zinc ion binding"/>
    <property type="evidence" value="ECO:0007669"/>
    <property type="project" value="UniProtKB-UniRule"/>
</dbReference>
<dbReference type="GO" id="GO:0006423">
    <property type="term" value="P:cysteinyl-tRNA aminoacylation"/>
    <property type="evidence" value="ECO:0007669"/>
    <property type="project" value="UniProtKB-UniRule"/>
</dbReference>
<dbReference type="CDD" id="cd00672">
    <property type="entry name" value="CysRS_core"/>
    <property type="match status" value="1"/>
</dbReference>
<dbReference type="FunFam" id="3.40.50.620:FF:000130">
    <property type="entry name" value="Cysteine--tRNA ligase"/>
    <property type="match status" value="1"/>
</dbReference>
<dbReference type="Gene3D" id="1.20.120.640">
    <property type="entry name" value="Anticodon-binding domain of a subclass of class I aminoacyl-tRNA synthetases"/>
    <property type="match status" value="1"/>
</dbReference>
<dbReference type="Gene3D" id="3.40.50.620">
    <property type="entry name" value="HUPs"/>
    <property type="match status" value="1"/>
</dbReference>
<dbReference type="HAMAP" id="MF_00041">
    <property type="entry name" value="Cys_tRNA_synth"/>
    <property type="match status" value="1"/>
</dbReference>
<dbReference type="InterPro" id="IPR015803">
    <property type="entry name" value="Cys-tRNA-ligase"/>
</dbReference>
<dbReference type="InterPro" id="IPR015273">
    <property type="entry name" value="Cys-tRNA-synt_Ia_DALR"/>
</dbReference>
<dbReference type="InterPro" id="IPR024909">
    <property type="entry name" value="Cys-tRNA/MSH_ligase"/>
</dbReference>
<dbReference type="InterPro" id="IPR056411">
    <property type="entry name" value="CysS_C"/>
</dbReference>
<dbReference type="InterPro" id="IPR014729">
    <property type="entry name" value="Rossmann-like_a/b/a_fold"/>
</dbReference>
<dbReference type="InterPro" id="IPR032678">
    <property type="entry name" value="tRNA-synt_1_cat_dom"/>
</dbReference>
<dbReference type="InterPro" id="IPR009080">
    <property type="entry name" value="tRNAsynth_Ia_anticodon-bd"/>
</dbReference>
<dbReference type="NCBIfam" id="TIGR00435">
    <property type="entry name" value="cysS"/>
    <property type="match status" value="1"/>
</dbReference>
<dbReference type="PANTHER" id="PTHR10890:SF3">
    <property type="entry name" value="CYSTEINE--TRNA LIGASE, CYTOPLASMIC"/>
    <property type="match status" value="1"/>
</dbReference>
<dbReference type="PANTHER" id="PTHR10890">
    <property type="entry name" value="CYSTEINYL-TRNA SYNTHETASE"/>
    <property type="match status" value="1"/>
</dbReference>
<dbReference type="Pfam" id="PF23493">
    <property type="entry name" value="CysS_C"/>
    <property type="match status" value="1"/>
</dbReference>
<dbReference type="Pfam" id="PF09190">
    <property type="entry name" value="DALR_2"/>
    <property type="match status" value="1"/>
</dbReference>
<dbReference type="Pfam" id="PF01406">
    <property type="entry name" value="tRNA-synt_1e"/>
    <property type="match status" value="1"/>
</dbReference>
<dbReference type="PRINTS" id="PR00983">
    <property type="entry name" value="TRNASYNTHCYS"/>
</dbReference>
<dbReference type="SMART" id="SM00840">
    <property type="entry name" value="DALR_2"/>
    <property type="match status" value="1"/>
</dbReference>
<dbReference type="SUPFAM" id="SSF47323">
    <property type="entry name" value="Anticodon-binding domain of a subclass of class I aminoacyl-tRNA synthetases"/>
    <property type="match status" value="1"/>
</dbReference>
<dbReference type="SUPFAM" id="SSF52374">
    <property type="entry name" value="Nucleotidylyl transferase"/>
    <property type="match status" value="1"/>
</dbReference>
<name>SYC_STRP3</name>
<sequence length="447" mass="50465">MIKIYDTMTRSLRKFVPLTENTVNMYVCGPTVYNYIHIGNARSAVAFDTIRRYFEYTGYQVNYISNFTDIDDKIIKAATQAGVSPKELSDRFIAAFIEDTKALGVKPATQNPRVMDYIAEIISFVESLIEKDFAYEADGDVYFRVEKSEHYAKLANKTLSELEVGASGRTDAETALKENPLDFALWKSAKAGEVSWDSPWGFGRPGWHIECSVMATEILGDTIDIHGGGADLEFPHHTNEIAQSEAKTGKTFANYWMHNGFVTVDNEKMSKSLGNFVTVHDMLQTVDGQVLRFFLATQQYRKPINFTEKAIHDAEINLKYLKNTLQQPLTETADEQELKQFVIAFQDAMDDDFNTANGITVVFDMAKWINSGSYTEPVKSAFEKMLAVFGIIFEEEVLEVDIEALIAKRQEARANRDFATADAIRDQLAAQGIKLLDTKDGVRWLRD</sequence>
<evidence type="ECO:0000255" key="1">
    <source>
        <dbReference type="HAMAP-Rule" id="MF_00041"/>
    </source>
</evidence>
<accession>P0DG32</accession>
<accession>Q8K5T7</accession>
<comment type="catalytic activity">
    <reaction evidence="1">
        <text>tRNA(Cys) + L-cysteine + ATP = L-cysteinyl-tRNA(Cys) + AMP + diphosphate</text>
        <dbReference type="Rhea" id="RHEA:17773"/>
        <dbReference type="Rhea" id="RHEA-COMP:9661"/>
        <dbReference type="Rhea" id="RHEA-COMP:9679"/>
        <dbReference type="ChEBI" id="CHEBI:30616"/>
        <dbReference type="ChEBI" id="CHEBI:33019"/>
        <dbReference type="ChEBI" id="CHEBI:35235"/>
        <dbReference type="ChEBI" id="CHEBI:78442"/>
        <dbReference type="ChEBI" id="CHEBI:78517"/>
        <dbReference type="ChEBI" id="CHEBI:456215"/>
        <dbReference type="EC" id="6.1.1.16"/>
    </reaction>
</comment>
<comment type="cofactor">
    <cofactor evidence="1">
        <name>Zn(2+)</name>
        <dbReference type="ChEBI" id="CHEBI:29105"/>
    </cofactor>
    <text evidence="1">Binds 1 zinc ion per subunit.</text>
</comment>
<comment type="subunit">
    <text evidence="1">Monomer.</text>
</comment>
<comment type="subcellular location">
    <subcellularLocation>
        <location evidence="1">Cytoplasm</location>
    </subcellularLocation>
</comment>
<comment type="similarity">
    <text evidence="1">Belongs to the class-I aminoacyl-tRNA synthetase family.</text>
</comment>
<reference key="1">
    <citation type="journal article" date="2002" name="Proc. Natl. Acad. Sci. U.S.A.">
        <title>Genome sequence of a serotype M3 strain of group A Streptococcus: phage-encoded toxins, the high-virulence phenotype, and clone emergence.</title>
        <authorList>
            <person name="Beres S.B."/>
            <person name="Sylva G.L."/>
            <person name="Barbian K.D."/>
            <person name="Lei B."/>
            <person name="Hoff J.S."/>
            <person name="Mammarella N.D."/>
            <person name="Liu M.-Y."/>
            <person name="Smoot J.C."/>
            <person name="Porcella S.F."/>
            <person name="Parkins L.D."/>
            <person name="Campbell D.S."/>
            <person name="Smith T.M."/>
            <person name="McCormick J.K."/>
            <person name="Leung D.Y.M."/>
            <person name="Schlievert P.M."/>
            <person name="Musser J.M."/>
        </authorList>
    </citation>
    <scope>NUCLEOTIDE SEQUENCE [LARGE SCALE GENOMIC DNA]</scope>
    <source>
        <strain>ATCC BAA-595 / MGAS315</strain>
    </source>
</reference>
<organism>
    <name type="scientific">Streptococcus pyogenes serotype M3 (strain ATCC BAA-595 / MGAS315)</name>
    <dbReference type="NCBI Taxonomy" id="198466"/>
    <lineage>
        <taxon>Bacteria</taxon>
        <taxon>Bacillati</taxon>
        <taxon>Bacillota</taxon>
        <taxon>Bacilli</taxon>
        <taxon>Lactobacillales</taxon>
        <taxon>Streptococcaceae</taxon>
        <taxon>Streptococcus</taxon>
    </lineage>
</organism>
<feature type="chain" id="PRO_0000159496" description="Cysteine--tRNA ligase">
    <location>
        <begin position="1"/>
        <end position="447"/>
    </location>
</feature>
<feature type="short sequence motif" description="'HIGH' region">
    <location>
        <begin position="30"/>
        <end position="40"/>
    </location>
</feature>
<feature type="short sequence motif" description="'KMSKS' region">
    <location>
        <begin position="268"/>
        <end position="272"/>
    </location>
</feature>
<feature type="binding site" evidence="1">
    <location>
        <position position="28"/>
    </location>
    <ligand>
        <name>Zn(2+)</name>
        <dbReference type="ChEBI" id="CHEBI:29105"/>
    </ligand>
</feature>
<feature type="binding site" evidence="1">
    <location>
        <position position="211"/>
    </location>
    <ligand>
        <name>Zn(2+)</name>
        <dbReference type="ChEBI" id="CHEBI:29105"/>
    </ligand>
</feature>
<feature type="binding site" evidence="1">
    <location>
        <position position="236"/>
    </location>
    <ligand>
        <name>Zn(2+)</name>
        <dbReference type="ChEBI" id="CHEBI:29105"/>
    </ligand>
</feature>
<feature type="binding site" evidence="1">
    <location>
        <position position="240"/>
    </location>
    <ligand>
        <name>Zn(2+)</name>
        <dbReference type="ChEBI" id="CHEBI:29105"/>
    </ligand>
</feature>
<feature type="binding site" evidence="1">
    <location>
        <position position="271"/>
    </location>
    <ligand>
        <name>ATP</name>
        <dbReference type="ChEBI" id="CHEBI:30616"/>
    </ligand>
</feature>
<gene>
    <name evidence="1" type="primary">cysS</name>
    <name type="ordered locus">SpyM3_1672</name>
</gene>
<protein>
    <recommendedName>
        <fullName evidence="1">Cysteine--tRNA ligase</fullName>
        <ecNumber evidence="1">6.1.1.16</ecNumber>
    </recommendedName>
    <alternativeName>
        <fullName evidence="1">Cysteinyl-tRNA synthetase</fullName>
        <shortName evidence="1">CysRS</shortName>
    </alternativeName>
</protein>
<keyword id="KW-0030">Aminoacyl-tRNA synthetase</keyword>
<keyword id="KW-0067">ATP-binding</keyword>
<keyword id="KW-0963">Cytoplasm</keyword>
<keyword id="KW-0436">Ligase</keyword>
<keyword id="KW-0479">Metal-binding</keyword>
<keyword id="KW-0547">Nucleotide-binding</keyword>
<keyword id="KW-0648">Protein biosynthesis</keyword>
<keyword id="KW-0862">Zinc</keyword>